<gene>
    <name evidence="1" type="primary">norR</name>
    <name type="ordered locus">SF2732</name>
    <name type="ordered locus">S2923</name>
</gene>
<comment type="function">
    <text evidence="1">Required for the expression of anaerobic nitric oxide (NO) reductase, acts as a transcriptional activator for at least the norVW operon. Activation also requires sigma-54.</text>
</comment>
<comment type="pathway">
    <text evidence="1">Nitrogen metabolism; nitric oxide reduction.</text>
</comment>
<comment type="sequence caution" evidence="2">
    <conflict type="erroneous initiation">
        <sequence resource="EMBL-CDS" id="AAN44223"/>
    </conflict>
</comment>
<comment type="sequence caution" evidence="2">
    <conflict type="erroneous initiation">
        <sequence resource="EMBL-CDS" id="AAP18049"/>
    </conflict>
</comment>
<organism>
    <name type="scientific">Shigella flexneri</name>
    <dbReference type="NCBI Taxonomy" id="623"/>
    <lineage>
        <taxon>Bacteria</taxon>
        <taxon>Pseudomonadati</taxon>
        <taxon>Pseudomonadota</taxon>
        <taxon>Gammaproteobacteria</taxon>
        <taxon>Enterobacterales</taxon>
        <taxon>Enterobacteriaceae</taxon>
        <taxon>Shigella</taxon>
    </lineage>
</organism>
<accession>P59402</accession>
<feature type="chain" id="PRO_0000081158" description="Anaerobic nitric oxide reductase transcription regulator NorR">
    <location>
        <begin position="1"/>
        <end position="504"/>
    </location>
</feature>
<feature type="domain" description="Sigma-54 factor interaction" evidence="1">
    <location>
        <begin position="187"/>
        <end position="416"/>
    </location>
</feature>
<feature type="DNA-binding region" description="H-T-H motif" evidence="1">
    <location>
        <begin position="479"/>
        <end position="498"/>
    </location>
</feature>
<feature type="binding site" evidence="1">
    <location>
        <begin position="215"/>
        <end position="222"/>
    </location>
    <ligand>
        <name>ATP</name>
        <dbReference type="ChEBI" id="CHEBI:30616"/>
    </ligand>
</feature>
<feature type="binding site" evidence="1">
    <location>
        <begin position="278"/>
        <end position="287"/>
    </location>
    <ligand>
        <name>ATP</name>
        <dbReference type="ChEBI" id="CHEBI:30616"/>
    </ligand>
</feature>
<feature type="modified residue" description="4-aspartylphosphate" evidence="1">
    <location>
        <position position="57"/>
    </location>
</feature>
<reference key="1">
    <citation type="journal article" date="2002" name="Nucleic Acids Res.">
        <title>Genome sequence of Shigella flexneri 2a: insights into pathogenicity through comparison with genomes of Escherichia coli K12 and O157.</title>
        <authorList>
            <person name="Jin Q."/>
            <person name="Yuan Z."/>
            <person name="Xu J."/>
            <person name="Wang Y."/>
            <person name="Shen Y."/>
            <person name="Lu W."/>
            <person name="Wang J."/>
            <person name="Liu H."/>
            <person name="Yang J."/>
            <person name="Yang F."/>
            <person name="Zhang X."/>
            <person name="Zhang J."/>
            <person name="Yang G."/>
            <person name="Wu H."/>
            <person name="Qu D."/>
            <person name="Dong J."/>
            <person name="Sun L."/>
            <person name="Xue Y."/>
            <person name="Zhao A."/>
            <person name="Gao Y."/>
            <person name="Zhu J."/>
            <person name="Kan B."/>
            <person name="Ding K."/>
            <person name="Chen S."/>
            <person name="Cheng H."/>
            <person name="Yao Z."/>
            <person name="He B."/>
            <person name="Chen R."/>
            <person name="Ma D."/>
            <person name="Qiang B."/>
            <person name="Wen Y."/>
            <person name="Hou Y."/>
            <person name="Yu J."/>
        </authorList>
    </citation>
    <scope>NUCLEOTIDE SEQUENCE [LARGE SCALE GENOMIC DNA]</scope>
    <source>
        <strain>301 / Serotype 2a</strain>
    </source>
</reference>
<reference key="2">
    <citation type="journal article" date="2003" name="Infect. Immun.">
        <title>Complete genome sequence and comparative genomics of Shigella flexneri serotype 2a strain 2457T.</title>
        <authorList>
            <person name="Wei J."/>
            <person name="Goldberg M.B."/>
            <person name="Burland V."/>
            <person name="Venkatesan M.M."/>
            <person name="Deng W."/>
            <person name="Fournier G."/>
            <person name="Mayhew G.F."/>
            <person name="Plunkett G. III"/>
            <person name="Rose D.J."/>
            <person name="Darling A."/>
            <person name="Mau B."/>
            <person name="Perna N.T."/>
            <person name="Payne S.M."/>
            <person name="Runyen-Janecky L.J."/>
            <person name="Zhou S."/>
            <person name="Schwartz D.C."/>
            <person name="Blattner F.R."/>
        </authorList>
    </citation>
    <scope>NUCLEOTIDE SEQUENCE [LARGE SCALE GENOMIC DNA]</scope>
    <source>
        <strain>ATCC 700930 / 2457T / Serotype 2a</strain>
    </source>
</reference>
<proteinExistence type="inferred from homology"/>
<sequence>MSFSVDVLANIAIELQRGIGHQDRFQRLITTLRQVLECDASALLRYDSRQFIPLAIDGLAKDVLGRRFALEGHPRLEAIARAGDVVRFPADSELPDPYDGLIPGQESLKVHACVGLPLFVGQNLIGALTLDGMQPDQFDVFSDEELRLIAALAAGALSNALLIEQLESQNMLPGDATPFEAVKQTQMIGLSPGMTQLKKEIEIVAASDLNVLISGETGTGKELVAKAIHEASPRAVNPLVYLNCAALPESVAESELFGHVKGAFTGAISNRSGKFEMADNGTLFLDEIGELSLALQAKLLRVLQYGDIQRVGDDRSLRVDVRVLAATNRDLREEVLAGRFRADLFHRLSVFPLSVPPLRERGDDVILLAGYFCEQCRLRQGLSRVVLSAGARNLLQHYSFPGNVRELEHAIHRAVVLARATRNGDEVILEAQHFAFPEVTLPPPEAAAVPVVKQNLREATEAFQRETIRQALAQNHHNWAACARMLETDVANLHRLAKRLGLKD</sequence>
<protein>
    <recommendedName>
        <fullName evidence="1">Anaerobic nitric oxide reductase transcription regulator NorR</fullName>
    </recommendedName>
</protein>
<dbReference type="EMBL" id="AE005674">
    <property type="protein sequence ID" value="AAN44223.1"/>
    <property type="status" value="ALT_INIT"/>
    <property type="molecule type" value="Genomic_DNA"/>
</dbReference>
<dbReference type="EMBL" id="AE014073">
    <property type="protein sequence ID" value="AAP18049.1"/>
    <property type="status" value="ALT_INIT"/>
    <property type="molecule type" value="Genomic_DNA"/>
</dbReference>
<dbReference type="RefSeq" id="WP_000010783.1">
    <property type="nucleotide sequence ID" value="NZ_WPGW01000014.1"/>
</dbReference>
<dbReference type="SMR" id="P59402"/>
<dbReference type="STRING" id="198214.SF2732"/>
<dbReference type="PaxDb" id="198214-SF2732"/>
<dbReference type="KEGG" id="sfl:SF2732"/>
<dbReference type="KEGG" id="sfx:S2923"/>
<dbReference type="PATRIC" id="fig|198214.7.peg.3253"/>
<dbReference type="HOGENOM" id="CLU_000445_125_0_6"/>
<dbReference type="UniPathway" id="UPA00638"/>
<dbReference type="Proteomes" id="UP000001006">
    <property type="component" value="Chromosome"/>
</dbReference>
<dbReference type="Proteomes" id="UP000002673">
    <property type="component" value="Chromosome"/>
</dbReference>
<dbReference type="GO" id="GO:0005524">
    <property type="term" value="F:ATP binding"/>
    <property type="evidence" value="ECO:0007669"/>
    <property type="project" value="UniProtKB-UniRule"/>
</dbReference>
<dbReference type="GO" id="GO:0016887">
    <property type="term" value="F:ATP hydrolysis activity"/>
    <property type="evidence" value="ECO:0007669"/>
    <property type="project" value="InterPro"/>
</dbReference>
<dbReference type="GO" id="GO:0003677">
    <property type="term" value="F:DNA binding"/>
    <property type="evidence" value="ECO:0007669"/>
    <property type="project" value="UniProtKB-KW"/>
</dbReference>
<dbReference type="GO" id="GO:0003700">
    <property type="term" value="F:DNA-binding transcription factor activity"/>
    <property type="evidence" value="ECO:0007669"/>
    <property type="project" value="UniProtKB-UniRule"/>
</dbReference>
<dbReference type="GO" id="GO:0000160">
    <property type="term" value="P:phosphorelay signal transduction system"/>
    <property type="evidence" value="ECO:0007669"/>
    <property type="project" value="UniProtKB-UniRule"/>
</dbReference>
<dbReference type="CDD" id="cd00009">
    <property type="entry name" value="AAA"/>
    <property type="match status" value="1"/>
</dbReference>
<dbReference type="FunFam" id="1.10.10.60:FF:000188">
    <property type="entry name" value="Anaerobic nitric oxide reductase transcription regulator NorR"/>
    <property type="match status" value="1"/>
</dbReference>
<dbReference type="FunFam" id="1.10.8.60:FF:000045">
    <property type="entry name" value="Anaerobic nitric oxide reductase transcription regulator NorR"/>
    <property type="match status" value="1"/>
</dbReference>
<dbReference type="FunFam" id="3.30.450.40:FF:000021">
    <property type="entry name" value="Anaerobic nitric oxide reductase transcription regulator NorR"/>
    <property type="match status" value="1"/>
</dbReference>
<dbReference type="FunFam" id="3.40.50.300:FF:000006">
    <property type="entry name" value="DNA-binding transcriptional regulator NtrC"/>
    <property type="match status" value="1"/>
</dbReference>
<dbReference type="Gene3D" id="1.10.8.60">
    <property type="match status" value="1"/>
</dbReference>
<dbReference type="Gene3D" id="3.30.450.40">
    <property type="match status" value="1"/>
</dbReference>
<dbReference type="Gene3D" id="1.10.10.60">
    <property type="entry name" value="Homeodomain-like"/>
    <property type="match status" value="1"/>
</dbReference>
<dbReference type="Gene3D" id="3.40.50.300">
    <property type="entry name" value="P-loop containing nucleotide triphosphate hydrolases"/>
    <property type="match status" value="1"/>
</dbReference>
<dbReference type="HAMAP" id="MF_01314">
    <property type="entry name" value="NorR"/>
    <property type="match status" value="1"/>
</dbReference>
<dbReference type="InterPro" id="IPR003593">
    <property type="entry name" value="AAA+_ATPase"/>
</dbReference>
<dbReference type="InterPro" id="IPR003018">
    <property type="entry name" value="GAF"/>
</dbReference>
<dbReference type="InterPro" id="IPR029016">
    <property type="entry name" value="GAF-like_dom_sf"/>
</dbReference>
<dbReference type="InterPro" id="IPR009057">
    <property type="entry name" value="Homeodomain-like_sf"/>
</dbReference>
<dbReference type="InterPro" id="IPR023944">
    <property type="entry name" value="NorR"/>
</dbReference>
<dbReference type="InterPro" id="IPR027417">
    <property type="entry name" value="P-loop_NTPase"/>
</dbReference>
<dbReference type="InterPro" id="IPR002078">
    <property type="entry name" value="Sigma_54_int"/>
</dbReference>
<dbReference type="InterPro" id="IPR025662">
    <property type="entry name" value="Sigma_54_int_dom_ATP-bd_1"/>
</dbReference>
<dbReference type="InterPro" id="IPR025943">
    <property type="entry name" value="Sigma_54_int_dom_ATP-bd_2"/>
</dbReference>
<dbReference type="InterPro" id="IPR025944">
    <property type="entry name" value="Sigma_54_int_dom_CS"/>
</dbReference>
<dbReference type="NCBIfam" id="NF003451">
    <property type="entry name" value="PRK05022.1"/>
    <property type="match status" value="1"/>
</dbReference>
<dbReference type="PANTHER" id="PTHR32071:SF35">
    <property type="entry name" value="ANAEROBIC NITRIC OXIDE REDUCTASE TRANSCRIPTION REGULATOR NORR"/>
    <property type="match status" value="1"/>
</dbReference>
<dbReference type="PANTHER" id="PTHR32071">
    <property type="entry name" value="TRANSCRIPTIONAL REGULATORY PROTEIN"/>
    <property type="match status" value="1"/>
</dbReference>
<dbReference type="Pfam" id="PF01590">
    <property type="entry name" value="GAF"/>
    <property type="match status" value="1"/>
</dbReference>
<dbReference type="Pfam" id="PF00158">
    <property type="entry name" value="Sigma54_activat"/>
    <property type="match status" value="1"/>
</dbReference>
<dbReference type="SMART" id="SM00382">
    <property type="entry name" value="AAA"/>
    <property type="match status" value="1"/>
</dbReference>
<dbReference type="SMART" id="SM00065">
    <property type="entry name" value="GAF"/>
    <property type="match status" value="1"/>
</dbReference>
<dbReference type="SUPFAM" id="SSF55781">
    <property type="entry name" value="GAF domain-like"/>
    <property type="match status" value="1"/>
</dbReference>
<dbReference type="SUPFAM" id="SSF46689">
    <property type="entry name" value="Homeodomain-like"/>
    <property type="match status" value="1"/>
</dbReference>
<dbReference type="SUPFAM" id="SSF52540">
    <property type="entry name" value="P-loop containing nucleoside triphosphate hydrolases"/>
    <property type="match status" value="1"/>
</dbReference>
<dbReference type="PROSITE" id="PS00675">
    <property type="entry name" value="SIGMA54_INTERACT_1"/>
    <property type="match status" value="1"/>
</dbReference>
<dbReference type="PROSITE" id="PS00676">
    <property type="entry name" value="SIGMA54_INTERACT_2"/>
    <property type="match status" value="1"/>
</dbReference>
<dbReference type="PROSITE" id="PS00688">
    <property type="entry name" value="SIGMA54_INTERACT_3"/>
    <property type="match status" value="1"/>
</dbReference>
<dbReference type="PROSITE" id="PS50045">
    <property type="entry name" value="SIGMA54_INTERACT_4"/>
    <property type="match status" value="1"/>
</dbReference>
<name>NORR_SHIFL</name>
<evidence type="ECO:0000255" key="1">
    <source>
        <dbReference type="HAMAP-Rule" id="MF_01314"/>
    </source>
</evidence>
<evidence type="ECO:0000305" key="2"/>
<keyword id="KW-0067">ATP-binding</keyword>
<keyword id="KW-0238">DNA-binding</keyword>
<keyword id="KW-0547">Nucleotide-binding</keyword>
<keyword id="KW-0597">Phosphoprotein</keyword>
<keyword id="KW-1185">Reference proteome</keyword>
<keyword id="KW-0804">Transcription</keyword>
<keyword id="KW-0805">Transcription regulation</keyword>